<accession>P26571</accession>
<proteinExistence type="inferred from homology"/>
<sequence>MSCSCGSSCGCGSNCNCGKMYPDLEEKSGATMQVTVIVLGVGSAKVQFEEAAEFGEAAHGCSCGANCKCNPCNC</sequence>
<name>MT1_HORVU</name>
<feature type="chain" id="PRO_0000197377" description="Metallothionein-like protein 1">
    <location>
        <begin position="1"/>
        <end position="74"/>
    </location>
</feature>
<organism>
    <name type="scientific">Hordeum vulgare</name>
    <name type="common">Barley</name>
    <dbReference type="NCBI Taxonomy" id="4513"/>
    <lineage>
        <taxon>Eukaryota</taxon>
        <taxon>Viridiplantae</taxon>
        <taxon>Streptophyta</taxon>
        <taxon>Embryophyta</taxon>
        <taxon>Tracheophyta</taxon>
        <taxon>Spermatophyta</taxon>
        <taxon>Magnoliopsida</taxon>
        <taxon>Liliopsida</taxon>
        <taxon>Poales</taxon>
        <taxon>Poaceae</taxon>
        <taxon>BOP clade</taxon>
        <taxon>Pooideae</taxon>
        <taxon>Triticodae</taxon>
        <taxon>Triticeae</taxon>
        <taxon>Hordeinae</taxon>
        <taxon>Hordeum</taxon>
    </lineage>
</organism>
<gene>
    <name type="primary">IDS-1</name>
</gene>
<evidence type="ECO:0000305" key="1"/>
<keyword id="KW-0479">Metal-binding</keyword>
<keyword id="KW-0480">Metal-thiolate cluster</keyword>
<reference key="1">
    <citation type="journal article" date="1991" name="Plant Mol. Biol.">
        <title>An iron deficiency-specific cDNA from barley roots having two homologous cysteine-rich MT domains.</title>
        <authorList>
            <person name="Okumura N."/>
            <person name="Nishizawa N.-K."/>
            <person name="Umehara Y."/>
            <person name="Mori S."/>
        </authorList>
    </citation>
    <scope>NUCLEOTIDE SEQUENCE [MRNA]</scope>
    <source>
        <strain>cv. Ehimehadaka No.1</strain>
        <tissue>Root</tissue>
    </source>
</reference>
<dbReference type="EMBL" id="X58540">
    <property type="protein sequence ID" value="CAA41432.1"/>
    <property type="molecule type" value="mRNA"/>
</dbReference>
<dbReference type="PIR" id="S17299">
    <property type="entry name" value="SMBH1"/>
</dbReference>
<dbReference type="ExpressionAtlas" id="P26571">
    <property type="expression patterns" value="baseline and differential"/>
</dbReference>
<dbReference type="GO" id="GO:0046872">
    <property type="term" value="F:metal ion binding"/>
    <property type="evidence" value="ECO:0007669"/>
    <property type="project" value="UniProtKB-KW"/>
</dbReference>
<dbReference type="InterPro" id="IPR000347">
    <property type="entry name" value="Metalthion_15p"/>
</dbReference>
<dbReference type="PANTHER" id="PTHR33543:SF15">
    <property type="entry name" value="METALLOTHIONEIN-LIKE PROTEIN 1A"/>
    <property type="match status" value="1"/>
</dbReference>
<dbReference type="PANTHER" id="PTHR33543">
    <property type="entry name" value="METALLOTHIONEIN-LIKE PROTEIN 2A"/>
    <property type="match status" value="1"/>
</dbReference>
<dbReference type="Pfam" id="PF01439">
    <property type="entry name" value="Metallothio_2"/>
    <property type="match status" value="1"/>
</dbReference>
<protein>
    <recommendedName>
        <fullName>Metallothionein-like protein 1</fullName>
        <shortName>MT-1</shortName>
    </recommendedName>
</protein>
<comment type="function">
    <text>Possibly relevant to mugineic acid-family (MAS) phytosiderophore production in iron-deficient barley roots. May have a function at the regulatory region of MAS synthetic genes or Fe(3+)-MAS transporter gene by conjugating with Fe(2+) like FUR protein.</text>
</comment>
<comment type="similarity">
    <text evidence="1">Belongs to the metallothionein superfamily. Type 15 family.</text>
</comment>